<accession>O84410</accession>
<organism>
    <name type="scientific">Chlamydia trachomatis serovar D (strain ATCC VR-885 / DSM 19411 / UW-3/Cx)</name>
    <dbReference type="NCBI Taxonomy" id="272561"/>
    <lineage>
        <taxon>Bacteria</taxon>
        <taxon>Pseudomonadati</taxon>
        <taxon>Chlamydiota</taxon>
        <taxon>Chlamydiia</taxon>
        <taxon>Chlamydiales</taxon>
        <taxon>Chlamydiaceae</taxon>
        <taxon>Chlamydia/Chlamydophila group</taxon>
        <taxon>Chlamydia</taxon>
    </lineage>
</organism>
<keyword id="KW-1185">Reference proteome</keyword>
<keyword id="KW-0677">Repeat</keyword>
<keyword id="KW-0686">Riboflavin biosynthesis</keyword>
<keyword id="KW-0808">Transferase</keyword>
<gene>
    <name type="primary">ribE</name>
    <name type="synonym">ribC</name>
    <name type="ordered locus">CT_405</name>
</gene>
<dbReference type="EC" id="2.5.1.9"/>
<dbReference type="EMBL" id="AE001273">
    <property type="protein sequence ID" value="AAC68002.1"/>
    <property type="molecule type" value="Genomic_DNA"/>
</dbReference>
<dbReference type="PIR" id="H71519">
    <property type="entry name" value="H71519"/>
</dbReference>
<dbReference type="RefSeq" id="NP_219915.1">
    <property type="nucleotide sequence ID" value="NC_000117.1"/>
</dbReference>
<dbReference type="RefSeq" id="WP_010725187.1">
    <property type="nucleotide sequence ID" value="NC_000117.1"/>
</dbReference>
<dbReference type="SMR" id="O84410"/>
<dbReference type="FunCoup" id="O84410">
    <property type="interactions" value="241"/>
</dbReference>
<dbReference type="STRING" id="272561.CT_405"/>
<dbReference type="EnsemblBacteria" id="AAC68002">
    <property type="protein sequence ID" value="AAC68002"/>
    <property type="gene ID" value="CT_405"/>
</dbReference>
<dbReference type="GeneID" id="884709"/>
<dbReference type="KEGG" id="ctr:CT_405"/>
<dbReference type="PATRIC" id="fig|272561.5.peg.436"/>
<dbReference type="HOGENOM" id="CLU_034388_0_1_0"/>
<dbReference type="InParanoid" id="O84410"/>
<dbReference type="OrthoDB" id="9788537at2"/>
<dbReference type="UniPathway" id="UPA00275">
    <property type="reaction ID" value="UER00405"/>
</dbReference>
<dbReference type="Proteomes" id="UP000000431">
    <property type="component" value="Chromosome"/>
</dbReference>
<dbReference type="GO" id="GO:0004746">
    <property type="term" value="F:riboflavin synthase activity"/>
    <property type="evidence" value="ECO:0000318"/>
    <property type="project" value="GO_Central"/>
</dbReference>
<dbReference type="GO" id="GO:0009231">
    <property type="term" value="P:riboflavin biosynthetic process"/>
    <property type="evidence" value="ECO:0000318"/>
    <property type="project" value="GO_Central"/>
</dbReference>
<dbReference type="CDD" id="cd00402">
    <property type="entry name" value="Riboflavin_synthase_like"/>
    <property type="match status" value="1"/>
</dbReference>
<dbReference type="Gene3D" id="2.40.30.20">
    <property type="match status" value="2"/>
</dbReference>
<dbReference type="InterPro" id="IPR023366">
    <property type="entry name" value="ATP_synth_asu-like_sf"/>
</dbReference>
<dbReference type="InterPro" id="IPR001783">
    <property type="entry name" value="Lumazine-bd"/>
</dbReference>
<dbReference type="InterPro" id="IPR026017">
    <property type="entry name" value="Lumazine-bd_dom"/>
</dbReference>
<dbReference type="InterPro" id="IPR017938">
    <property type="entry name" value="Riboflavin_synthase-like_b-brl"/>
</dbReference>
<dbReference type="NCBIfam" id="NF006767">
    <property type="entry name" value="PRK09289.1"/>
    <property type="match status" value="1"/>
</dbReference>
<dbReference type="NCBIfam" id="NF009566">
    <property type="entry name" value="PRK13020.1"/>
    <property type="match status" value="1"/>
</dbReference>
<dbReference type="NCBIfam" id="TIGR00187">
    <property type="entry name" value="ribE"/>
    <property type="match status" value="1"/>
</dbReference>
<dbReference type="PANTHER" id="PTHR21098:SF0">
    <property type="entry name" value="RIBOFLAVIN SYNTHASE"/>
    <property type="match status" value="1"/>
</dbReference>
<dbReference type="PANTHER" id="PTHR21098">
    <property type="entry name" value="RIBOFLAVIN SYNTHASE ALPHA CHAIN"/>
    <property type="match status" value="1"/>
</dbReference>
<dbReference type="Pfam" id="PF00677">
    <property type="entry name" value="Lum_binding"/>
    <property type="match status" value="2"/>
</dbReference>
<dbReference type="PIRSF" id="PIRSF000498">
    <property type="entry name" value="Riboflavin_syn_A"/>
    <property type="match status" value="1"/>
</dbReference>
<dbReference type="SUPFAM" id="SSF63380">
    <property type="entry name" value="Riboflavin synthase domain-like"/>
    <property type="match status" value="2"/>
</dbReference>
<dbReference type="PROSITE" id="PS51177">
    <property type="entry name" value="LUMAZINE_BIND"/>
    <property type="match status" value="2"/>
</dbReference>
<comment type="function">
    <text evidence="1">Catalyzes the dismutation of two molecules of 6,7-dimethyl-8-ribityllumazine, resulting in the formation of riboflavin and 5-amino-6-(D-ribitylamino)uracil.</text>
</comment>
<comment type="catalytic activity">
    <reaction>
        <text>2 6,7-dimethyl-8-(1-D-ribityl)lumazine + H(+) = 5-amino-6-(D-ribitylamino)uracil + riboflavin</text>
        <dbReference type="Rhea" id="RHEA:20772"/>
        <dbReference type="ChEBI" id="CHEBI:15378"/>
        <dbReference type="ChEBI" id="CHEBI:15934"/>
        <dbReference type="ChEBI" id="CHEBI:57986"/>
        <dbReference type="ChEBI" id="CHEBI:58201"/>
        <dbReference type="EC" id="2.5.1.9"/>
    </reaction>
</comment>
<comment type="pathway">
    <text>Cofactor biosynthesis; riboflavin biosynthesis; riboflavin from 2-hydroxy-3-oxobutyl phosphate and 5-amino-6-(D-ribitylamino)uracil: step 2/2.</text>
</comment>
<comment type="subunit">
    <text evidence="1">Homotrimer.</text>
</comment>
<reference key="1">
    <citation type="journal article" date="1998" name="Science">
        <title>Genome sequence of an obligate intracellular pathogen of humans: Chlamydia trachomatis.</title>
        <authorList>
            <person name="Stephens R.S."/>
            <person name="Kalman S."/>
            <person name="Lammel C.J."/>
            <person name="Fan J."/>
            <person name="Marathe R."/>
            <person name="Aravind L."/>
            <person name="Mitchell W.P."/>
            <person name="Olinger L."/>
            <person name="Tatusov R.L."/>
            <person name="Zhao Q."/>
            <person name="Koonin E.V."/>
            <person name="Davis R.W."/>
        </authorList>
    </citation>
    <scope>NUCLEOTIDE SEQUENCE [LARGE SCALE GENOMIC DNA]</scope>
    <source>
        <strain>ATCC VR-885 / DSM 19411 / UW-3/Cx</strain>
    </source>
</reference>
<evidence type="ECO:0000250" key="1"/>
<evidence type="ECO:0000250" key="2">
    <source>
        <dbReference type="UniProtKB" id="P0AFU8"/>
    </source>
</evidence>
<evidence type="ECO:0000250" key="3">
    <source>
        <dbReference type="UniProtKB" id="Q2YN92"/>
    </source>
</evidence>
<feature type="chain" id="PRO_0000068165" description="Riboflavin synthase">
    <location>
        <begin position="1"/>
        <end position="199"/>
    </location>
</feature>
<feature type="repeat" description="Lumazine-binding 1">
    <location>
        <begin position="1"/>
        <end position="95"/>
    </location>
</feature>
<feature type="repeat" description="Lumazine-binding 2">
    <location>
        <begin position="96"/>
        <end position="188"/>
    </location>
</feature>
<feature type="binding site" evidence="3">
    <location>
        <begin position="4"/>
        <end position="6"/>
    </location>
    <ligand>
        <name>2,4-dihydroxypteridine</name>
        <dbReference type="ChEBI" id="CHEBI:16489"/>
        <label>1</label>
    </ligand>
</feature>
<feature type="binding site" evidence="3">
    <location>
        <begin position="46"/>
        <end position="48"/>
    </location>
    <ligand>
        <name>2,4-dihydroxypteridine</name>
        <dbReference type="ChEBI" id="CHEBI:16489"/>
        <label>2</label>
        <note>ligand shared between two trimeric partners</note>
    </ligand>
</feature>
<feature type="binding site" evidence="2">
    <location>
        <begin position="60"/>
        <end position="65"/>
    </location>
    <ligand>
        <name>2,4-dihydroxypteridine</name>
        <dbReference type="ChEBI" id="CHEBI:16489"/>
        <label>2</label>
        <note>ligand shared between two trimeric partners</note>
    </ligand>
</feature>
<feature type="binding site" evidence="3">
    <location>
        <begin position="99"/>
        <end position="101"/>
    </location>
    <ligand>
        <name>2,4-dihydroxypteridine</name>
        <dbReference type="ChEBI" id="CHEBI:16489"/>
        <label>2</label>
        <note>ligand shared between two trimeric partners</note>
    </ligand>
</feature>
<feature type="binding site" description="in other chain" evidence="3">
    <location>
        <position position="130"/>
    </location>
    <ligand>
        <name>2,4-dihydroxypteridine</name>
        <dbReference type="ChEBI" id="CHEBI:16489"/>
        <label>2</label>
        <note>ligand shared between two trimeric partners</note>
    </ligand>
</feature>
<feature type="binding site" evidence="3">
    <location>
        <begin position="139"/>
        <end position="141"/>
    </location>
    <ligand>
        <name>2,4-dihydroxypteridine</name>
        <dbReference type="ChEBI" id="CHEBI:16489"/>
        <label>1</label>
    </ligand>
</feature>
<feature type="binding site" evidence="3">
    <location>
        <begin position="153"/>
        <end position="158"/>
    </location>
    <ligand>
        <name>2,4-dihydroxypteridine</name>
        <dbReference type="ChEBI" id="CHEBI:16489"/>
        <label>1</label>
    </ligand>
</feature>
<proteinExistence type="inferred from homology"/>
<sequence length="199" mass="22222">MFSGIIQEVARVDLIHHLRDSMEIGVFARKLIDVVPGSSFSVDGICLTLVKRQYELLFFDVTEETMAWTTIKDYTVGTMVNLERSVRLGDEIGGHFVSGHVCGIGTIIAIEKSYMFFKAPANLVPYILEKGFIAIDGISLTIARVKGDIFSVSLIPETRARTSLGYKQVGAHVNMEPDMMTKMQVDTIMRFHAEKEISK</sequence>
<protein>
    <recommendedName>
        <fullName>Riboflavin synthase</fullName>
        <shortName>RS</shortName>
        <ecNumber>2.5.1.9</ecNumber>
    </recommendedName>
</protein>
<name>RISA_CHLTR</name>